<organism>
    <name type="scientific">Burkholderia pseudomallei (strain 668)</name>
    <dbReference type="NCBI Taxonomy" id="320373"/>
    <lineage>
        <taxon>Bacteria</taxon>
        <taxon>Pseudomonadati</taxon>
        <taxon>Pseudomonadota</taxon>
        <taxon>Betaproteobacteria</taxon>
        <taxon>Burkholderiales</taxon>
        <taxon>Burkholderiaceae</taxon>
        <taxon>Burkholderia</taxon>
        <taxon>pseudomallei group</taxon>
    </lineage>
</organism>
<comment type="function">
    <text evidence="1">Involved in the biosynthesis of lipid A, a phosphorylated glycolipid that anchors the lipopolysaccharide to the outer membrane of the cell.</text>
</comment>
<comment type="catalytic activity">
    <reaction evidence="1">
        <text>a (3R)-hydroxyacyl-[ACP] + UDP-N-acetyl-alpha-D-glucosamine = a UDP-3-O-[(3R)-3-hydroxyacyl]-N-acetyl-alpha-D-glucosamine + holo-[ACP]</text>
        <dbReference type="Rhea" id="RHEA:67812"/>
        <dbReference type="Rhea" id="RHEA-COMP:9685"/>
        <dbReference type="Rhea" id="RHEA-COMP:9945"/>
        <dbReference type="ChEBI" id="CHEBI:57705"/>
        <dbReference type="ChEBI" id="CHEBI:64479"/>
        <dbReference type="ChEBI" id="CHEBI:78827"/>
        <dbReference type="ChEBI" id="CHEBI:173225"/>
        <dbReference type="EC" id="2.3.1.129"/>
    </reaction>
</comment>
<comment type="pathway">
    <text evidence="1">Glycolipid biosynthesis; lipid IV(A) biosynthesis; lipid IV(A) from (3R)-3-hydroxytetradecanoyl-[acyl-carrier-protein] and UDP-N-acetyl-alpha-D-glucosamine: step 1/6.</text>
</comment>
<comment type="subunit">
    <text evidence="1">Homotrimer.</text>
</comment>
<comment type="subcellular location">
    <subcellularLocation>
        <location evidence="1">Cytoplasm</location>
    </subcellularLocation>
</comment>
<comment type="similarity">
    <text evidence="1">Belongs to the transferase hexapeptide repeat family. LpxA subfamily.</text>
</comment>
<sequence length="262" mass="27941">MSRIHPTAIIEPGAQLHETVEVGPYAIVGSHVTIGARTTIGSHSVIEGHTTIGEDNRIGHYASVGGRPQDMKYKDEPTRLVIGDRNTIREFTTIHTGTVQDTGVTTLGDDNWIMAYVHIGHDCRVGSHVILSSNAQMAGHVEIGDWAIVGGMSGVHQFVRIGAHSMLGGASALVQDIPPFVIAAGNKAEPHGINVEGLRRRGFSPDAISALRSAYRILYKNSLSLEEAKVQLSELAQAGGDGDAAVKSLVDFVESSQRGIIR</sequence>
<accession>A3NAT5</accession>
<evidence type="ECO:0000255" key="1">
    <source>
        <dbReference type="HAMAP-Rule" id="MF_00387"/>
    </source>
</evidence>
<dbReference type="EC" id="2.3.1.129" evidence="1"/>
<dbReference type="EMBL" id="CP000570">
    <property type="protein sequence ID" value="ABN82187.1"/>
    <property type="molecule type" value="Genomic_DNA"/>
</dbReference>
<dbReference type="RefSeq" id="WP_004193051.1">
    <property type="nucleotide sequence ID" value="NC_009074.1"/>
</dbReference>
<dbReference type="SMR" id="A3NAT5"/>
<dbReference type="GeneID" id="93060688"/>
<dbReference type="KEGG" id="bpd:BURPS668_2424"/>
<dbReference type="HOGENOM" id="CLU_061249_0_0_4"/>
<dbReference type="UniPathway" id="UPA00359">
    <property type="reaction ID" value="UER00477"/>
</dbReference>
<dbReference type="GO" id="GO:0005737">
    <property type="term" value="C:cytoplasm"/>
    <property type="evidence" value="ECO:0007669"/>
    <property type="project" value="UniProtKB-SubCell"/>
</dbReference>
<dbReference type="GO" id="GO:0016020">
    <property type="term" value="C:membrane"/>
    <property type="evidence" value="ECO:0007669"/>
    <property type="project" value="GOC"/>
</dbReference>
<dbReference type="GO" id="GO:0008780">
    <property type="term" value="F:acyl-[acyl-carrier-protein]-UDP-N-acetylglucosamine O-acyltransferase activity"/>
    <property type="evidence" value="ECO:0007669"/>
    <property type="project" value="UniProtKB-UniRule"/>
</dbReference>
<dbReference type="GO" id="GO:0009245">
    <property type="term" value="P:lipid A biosynthetic process"/>
    <property type="evidence" value="ECO:0007669"/>
    <property type="project" value="UniProtKB-UniRule"/>
</dbReference>
<dbReference type="CDD" id="cd03351">
    <property type="entry name" value="LbH_UDP-GlcNAc_AT"/>
    <property type="match status" value="1"/>
</dbReference>
<dbReference type="Gene3D" id="2.160.10.10">
    <property type="entry name" value="Hexapeptide repeat proteins"/>
    <property type="match status" value="1"/>
</dbReference>
<dbReference type="Gene3D" id="1.20.1180.10">
    <property type="entry name" value="Udp N-acetylglucosamine O-acyltransferase, C-terminal domain"/>
    <property type="match status" value="1"/>
</dbReference>
<dbReference type="HAMAP" id="MF_00387">
    <property type="entry name" value="LpxA"/>
    <property type="match status" value="1"/>
</dbReference>
<dbReference type="InterPro" id="IPR029098">
    <property type="entry name" value="Acetyltransf_C"/>
</dbReference>
<dbReference type="InterPro" id="IPR037157">
    <property type="entry name" value="Acetyltransf_C_sf"/>
</dbReference>
<dbReference type="InterPro" id="IPR001451">
    <property type="entry name" value="Hexapep"/>
</dbReference>
<dbReference type="InterPro" id="IPR010137">
    <property type="entry name" value="Lipid_A_LpxA"/>
</dbReference>
<dbReference type="InterPro" id="IPR011004">
    <property type="entry name" value="Trimer_LpxA-like_sf"/>
</dbReference>
<dbReference type="NCBIfam" id="TIGR01852">
    <property type="entry name" value="lipid_A_lpxA"/>
    <property type="match status" value="1"/>
</dbReference>
<dbReference type="NCBIfam" id="NF003657">
    <property type="entry name" value="PRK05289.1"/>
    <property type="match status" value="1"/>
</dbReference>
<dbReference type="PANTHER" id="PTHR43480">
    <property type="entry name" value="ACYL-[ACYL-CARRIER-PROTEIN]--UDP-N-ACETYLGLUCOSAMINE O-ACYLTRANSFERASE"/>
    <property type="match status" value="1"/>
</dbReference>
<dbReference type="PANTHER" id="PTHR43480:SF1">
    <property type="entry name" value="ACYL-[ACYL-CARRIER-PROTEIN]--UDP-N-ACETYLGLUCOSAMINE O-ACYLTRANSFERASE, MITOCHONDRIAL-RELATED"/>
    <property type="match status" value="1"/>
</dbReference>
<dbReference type="Pfam" id="PF13720">
    <property type="entry name" value="Acetyltransf_11"/>
    <property type="match status" value="1"/>
</dbReference>
<dbReference type="Pfam" id="PF00132">
    <property type="entry name" value="Hexapep"/>
    <property type="match status" value="2"/>
</dbReference>
<dbReference type="PIRSF" id="PIRSF000456">
    <property type="entry name" value="UDP-GlcNAc_acltr"/>
    <property type="match status" value="1"/>
</dbReference>
<dbReference type="SUPFAM" id="SSF51161">
    <property type="entry name" value="Trimeric LpxA-like enzymes"/>
    <property type="match status" value="1"/>
</dbReference>
<dbReference type="PROSITE" id="PS00101">
    <property type="entry name" value="HEXAPEP_TRANSFERASES"/>
    <property type="match status" value="1"/>
</dbReference>
<feature type="chain" id="PRO_1000013157" description="Acyl-[acyl-carrier-protein]--UDP-N-acetylglucosamine O-acyltransferase">
    <location>
        <begin position="1"/>
        <end position="262"/>
    </location>
</feature>
<reference key="1">
    <citation type="journal article" date="2010" name="Genome Biol. Evol.">
        <title>Continuing evolution of Burkholderia mallei through genome reduction and large-scale rearrangements.</title>
        <authorList>
            <person name="Losada L."/>
            <person name="Ronning C.M."/>
            <person name="DeShazer D."/>
            <person name="Woods D."/>
            <person name="Fedorova N."/>
            <person name="Kim H.S."/>
            <person name="Shabalina S.A."/>
            <person name="Pearson T.R."/>
            <person name="Brinkac L."/>
            <person name="Tan P."/>
            <person name="Nandi T."/>
            <person name="Crabtree J."/>
            <person name="Badger J."/>
            <person name="Beckstrom-Sternberg S."/>
            <person name="Saqib M."/>
            <person name="Schutzer S.E."/>
            <person name="Keim P."/>
            <person name="Nierman W.C."/>
        </authorList>
    </citation>
    <scope>NUCLEOTIDE SEQUENCE [LARGE SCALE GENOMIC DNA]</scope>
    <source>
        <strain>668</strain>
    </source>
</reference>
<gene>
    <name evidence="1" type="primary">lpxA</name>
    <name type="ordered locus">BURPS668_2424</name>
</gene>
<proteinExistence type="inferred from homology"/>
<name>LPXA_BURP6</name>
<protein>
    <recommendedName>
        <fullName evidence="1">Acyl-[acyl-carrier-protein]--UDP-N-acetylglucosamine O-acyltransferase</fullName>
        <shortName evidence="1">UDP-N-acetylglucosamine acyltransferase</shortName>
        <ecNumber evidence="1">2.3.1.129</ecNumber>
    </recommendedName>
</protein>
<keyword id="KW-0012">Acyltransferase</keyword>
<keyword id="KW-0963">Cytoplasm</keyword>
<keyword id="KW-0441">Lipid A biosynthesis</keyword>
<keyword id="KW-0444">Lipid biosynthesis</keyword>
<keyword id="KW-0443">Lipid metabolism</keyword>
<keyword id="KW-0677">Repeat</keyword>
<keyword id="KW-0808">Transferase</keyword>